<gene>
    <name type="primary">cycB</name>
    <name type="ordered locus">blr6128</name>
</gene>
<keyword id="KW-0903">Direct protein sequencing</keyword>
<keyword id="KW-0249">Electron transport</keyword>
<keyword id="KW-0349">Heme</keyword>
<keyword id="KW-0408">Iron</keyword>
<keyword id="KW-0479">Metal-binding</keyword>
<keyword id="KW-0535">Nitrogen fixation</keyword>
<keyword id="KW-0574">Periplasm</keyword>
<keyword id="KW-1185">Reference proteome</keyword>
<keyword id="KW-0732">Signal</keyword>
<keyword id="KW-0813">Transport</keyword>
<reference key="1">
    <citation type="journal article" date="1991" name="FEMS Microbiol. Lett.">
        <title>Cloning, sequencing and mutational analysis of the cytochrome c552 gene (cycB) from Bradyrhizobium japonicum strain 110.</title>
        <authorList>
            <person name="Rossbach S."/>
            <person name="Loferer H."/>
            <person name="Acuna G."/>
            <person name="Appleby C.A."/>
            <person name="Hennecke H."/>
        </authorList>
    </citation>
    <scope>NUCLEOTIDE SEQUENCE [GENOMIC DNA]</scope>
    <source>
        <strain>USDA 110spc4</strain>
    </source>
</reference>
<reference key="2">
    <citation type="journal article" date="2002" name="DNA Res.">
        <title>Complete genomic sequence of nitrogen-fixing symbiotic bacterium Bradyrhizobium japonicum USDA110.</title>
        <authorList>
            <person name="Kaneko T."/>
            <person name="Nakamura Y."/>
            <person name="Sato S."/>
            <person name="Minamisawa K."/>
            <person name="Uchiumi T."/>
            <person name="Sasamoto S."/>
            <person name="Watanabe A."/>
            <person name="Idesawa K."/>
            <person name="Iriguchi M."/>
            <person name="Kawashima K."/>
            <person name="Kohara M."/>
            <person name="Matsumoto M."/>
            <person name="Shimpo S."/>
            <person name="Tsuruoka H."/>
            <person name="Wada T."/>
            <person name="Yamada M."/>
            <person name="Tabata S."/>
        </authorList>
    </citation>
    <scope>NUCLEOTIDE SEQUENCE [LARGE SCALE GENOMIC DNA]</scope>
    <source>
        <strain>JCM 10833 / BCRC 13528 / IAM 13628 / NBRC 14792 / USDA 110</strain>
    </source>
</reference>
<reference key="3">
    <citation type="journal article" date="1991" name="FEMS Microbiol. Lett.">
        <title>Characterization of three soluble c-type cytochromes isolated from soybean root nodule bacteroids of Bradyrhizobium japonicum strain CC705.</title>
        <authorList>
            <person name="Appleby C.A."/>
            <person name="James P."/>
            <person name="Hennecke H."/>
        </authorList>
    </citation>
    <scope>PROTEIN SEQUENCE OF 24-104</scope>
    <source>
        <strain>CC705 / UW505</strain>
    </source>
</reference>
<accession>P24059</accession>
<accession>P30965</accession>
<feature type="signal peptide" evidence="2">
    <location>
        <begin position="1"/>
        <end position="23"/>
    </location>
</feature>
<feature type="chain" id="PRO_0000006530" description="Cytochrome c-552">
    <location>
        <begin position="24"/>
        <end position="104"/>
    </location>
</feature>
<feature type="binding site" description="covalent">
    <location>
        <position position="37"/>
    </location>
    <ligand>
        <name>heme c</name>
        <dbReference type="ChEBI" id="CHEBI:61717"/>
    </ligand>
</feature>
<feature type="binding site" description="covalent">
    <location>
        <position position="40"/>
    </location>
    <ligand>
        <name>heme c</name>
        <dbReference type="ChEBI" id="CHEBI:61717"/>
    </ligand>
</feature>
<feature type="binding site" description="axial binding residue" evidence="1">
    <location>
        <position position="41"/>
    </location>
    <ligand>
        <name>heme c</name>
        <dbReference type="ChEBI" id="CHEBI:61717"/>
    </ligand>
    <ligandPart>
        <name>Fe</name>
        <dbReference type="ChEBI" id="CHEBI:18248"/>
    </ligandPart>
</feature>
<feature type="binding site" description="axial binding residue" evidence="1">
    <location>
        <position position="82"/>
    </location>
    <ligand>
        <name>heme c</name>
        <dbReference type="ChEBI" id="CHEBI:61717"/>
    </ligand>
    <ligandPart>
        <name>Fe</name>
        <dbReference type="ChEBI" id="CHEBI:18248"/>
    </ligandPart>
</feature>
<feature type="sequence variant" description="In strain: CC705 / UW505.">
    <original>D</original>
    <variation>N</variation>
    <location>
        <position position="25"/>
    </location>
</feature>
<feature type="sequence variant" description="In strain: CC705 / UW505.">
    <original>G</original>
    <variation>E</variation>
    <location>
        <position position="27"/>
    </location>
</feature>
<feature type="sequence variant" description="In strain: CC705 / UW505.">
    <original>AV</original>
    <variation>TQ</variation>
    <location>
        <begin position="48"/>
        <end position="49"/>
    </location>
</feature>
<feature type="sequence variant" description="In strain: CC705 / UW505.">
    <original>V</original>
    <variation>F</variation>
    <location>
        <position position="60"/>
    </location>
</feature>
<feature type="sequence variant" description="In strain: CC705 / UW505.">
    <location>
        <position position="63"/>
    </location>
</feature>
<feature type="sequence variant" description="In strain: CC705 / UW505.">
    <original>S</original>
    <variation>P</variation>
    <location>
        <position position="68"/>
    </location>
</feature>
<feature type="sequence variant" description="In strain: CC705 / UW505.">
    <location>
        <begin position="70"/>
        <end position="74"/>
    </location>
</feature>
<feature type="sequence variant" description="In strain: CC705 / UW505.">
    <original>S</original>
    <variation>N</variation>
    <location>
        <position position="84"/>
    </location>
</feature>
<feature type="sequence variant" description="In strain: CC705 / UW505.">
    <original>G</original>
    <variation>A</variation>
    <location>
        <position position="100"/>
    </location>
</feature>
<feature type="sequence variant" description="In strain: CC705 / UW505.">
    <location>
        <begin position="103"/>
        <end position="104"/>
    </location>
</feature>
<name>CY552_BRADU</name>
<proteinExistence type="evidence at protein level"/>
<sequence>MHLHLRGICLVLAVASSSSSALAADAGHGADLAKRWCASCHVVANGQAVASADVPSFASVARRPDFSSEKLAFFLLDPHPKMPSFPLSRTEAGDIAAYIGSLRP</sequence>
<protein>
    <recommendedName>
        <fullName>Cytochrome c-552</fullName>
    </recommendedName>
    <alternativeName>
        <fullName>Cytochrome c552</fullName>
    </alternativeName>
</protein>
<organism>
    <name type="scientific">Bradyrhizobium diazoefficiens (strain JCM 10833 / BCRC 13528 / IAM 13628 / NBRC 14792 / USDA 110)</name>
    <dbReference type="NCBI Taxonomy" id="224911"/>
    <lineage>
        <taxon>Bacteria</taxon>
        <taxon>Pseudomonadati</taxon>
        <taxon>Pseudomonadota</taxon>
        <taxon>Alphaproteobacteria</taxon>
        <taxon>Hyphomicrobiales</taxon>
        <taxon>Nitrobacteraceae</taxon>
        <taxon>Bradyrhizobium</taxon>
    </lineage>
</organism>
<comment type="subunit">
    <text>Monoheme monomer. Has the tendency to dimerize.</text>
</comment>
<comment type="subcellular location">
    <subcellularLocation>
        <location>Periplasm</location>
    </subcellularLocation>
</comment>
<comment type="PTM">
    <text>Binds 1 heme c group covalently per subunit.</text>
</comment>
<comment type="similarity">
    <text evidence="3">Belongs to the cytochrome c family.</text>
</comment>
<evidence type="ECO:0000255" key="1">
    <source>
        <dbReference type="PROSITE-ProRule" id="PRU00433"/>
    </source>
</evidence>
<evidence type="ECO:0000269" key="2">
    <source>
    </source>
</evidence>
<evidence type="ECO:0000305" key="3"/>
<dbReference type="EMBL" id="X60354">
    <property type="protein sequence ID" value="CAA42914.1"/>
    <property type="molecule type" value="Genomic_DNA"/>
</dbReference>
<dbReference type="EMBL" id="BA000040">
    <property type="protein sequence ID" value="BAC51393.1"/>
    <property type="molecule type" value="Genomic_DNA"/>
</dbReference>
<dbReference type="PIR" id="S18821">
    <property type="entry name" value="S18821"/>
</dbReference>
<dbReference type="RefSeq" id="NP_772768.1">
    <property type="nucleotide sequence ID" value="NC_004463.1"/>
</dbReference>
<dbReference type="RefSeq" id="WP_011088869.1">
    <property type="nucleotide sequence ID" value="NC_004463.1"/>
</dbReference>
<dbReference type="SMR" id="P24059"/>
<dbReference type="STRING" id="224911.AAV28_28175"/>
<dbReference type="EnsemblBacteria" id="BAC51393">
    <property type="protein sequence ID" value="BAC51393"/>
    <property type="gene ID" value="BAC51393"/>
</dbReference>
<dbReference type="GeneID" id="46493117"/>
<dbReference type="KEGG" id="bja:blr6128"/>
<dbReference type="PATRIC" id="fig|224911.44.peg.6088"/>
<dbReference type="eggNOG" id="COG2010">
    <property type="taxonomic scope" value="Bacteria"/>
</dbReference>
<dbReference type="HOGENOM" id="CLU_133116_1_1_5"/>
<dbReference type="InParanoid" id="P24059"/>
<dbReference type="OrthoDB" id="7873796at2"/>
<dbReference type="PhylomeDB" id="P24059"/>
<dbReference type="Proteomes" id="UP000002526">
    <property type="component" value="Chromosome"/>
</dbReference>
<dbReference type="GO" id="GO:0042597">
    <property type="term" value="C:periplasmic space"/>
    <property type="evidence" value="ECO:0007669"/>
    <property type="project" value="UniProtKB-SubCell"/>
</dbReference>
<dbReference type="GO" id="GO:0009055">
    <property type="term" value="F:electron transfer activity"/>
    <property type="evidence" value="ECO:0007669"/>
    <property type="project" value="InterPro"/>
</dbReference>
<dbReference type="GO" id="GO:0020037">
    <property type="term" value="F:heme binding"/>
    <property type="evidence" value="ECO:0007669"/>
    <property type="project" value="InterPro"/>
</dbReference>
<dbReference type="GO" id="GO:0046872">
    <property type="term" value="F:metal ion binding"/>
    <property type="evidence" value="ECO:0007669"/>
    <property type="project" value="UniProtKB-KW"/>
</dbReference>
<dbReference type="GO" id="GO:0009399">
    <property type="term" value="P:nitrogen fixation"/>
    <property type="evidence" value="ECO:0007669"/>
    <property type="project" value="UniProtKB-KW"/>
</dbReference>
<dbReference type="Gene3D" id="1.10.760.10">
    <property type="entry name" value="Cytochrome c-like domain"/>
    <property type="match status" value="1"/>
</dbReference>
<dbReference type="InterPro" id="IPR009056">
    <property type="entry name" value="Cyt_c-like_dom"/>
</dbReference>
<dbReference type="InterPro" id="IPR036909">
    <property type="entry name" value="Cyt_c-like_dom_sf"/>
</dbReference>
<dbReference type="Pfam" id="PF13442">
    <property type="entry name" value="Cytochrome_CBB3"/>
    <property type="match status" value="1"/>
</dbReference>
<dbReference type="SUPFAM" id="SSF46626">
    <property type="entry name" value="Cytochrome c"/>
    <property type="match status" value="1"/>
</dbReference>
<dbReference type="PROSITE" id="PS51007">
    <property type="entry name" value="CYTC"/>
    <property type="match status" value="1"/>
</dbReference>